<comment type="function">
    <text evidence="1">Component of the acetyl coenzyme A carboxylase (ACC) complex. First, biotin carboxylase catalyzes the carboxylation of biotin on its carrier protein (BCCP) and then the CO(2) group is transferred by the carboxyltransferase to acetyl-CoA to form malonyl-CoA.</text>
</comment>
<comment type="catalytic activity">
    <reaction evidence="1">
        <text>N(6)-carboxybiotinyl-L-lysyl-[protein] + acetyl-CoA = N(6)-biotinyl-L-lysyl-[protein] + malonyl-CoA</text>
        <dbReference type="Rhea" id="RHEA:54728"/>
        <dbReference type="Rhea" id="RHEA-COMP:10505"/>
        <dbReference type="Rhea" id="RHEA-COMP:10506"/>
        <dbReference type="ChEBI" id="CHEBI:57288"/>
        <dbReference type="ChEBI" id="CHEBI:57384"/>
        <dbReference type="ChEBI" id="CHEBI:83144"/>
        <dbReference type="ChEBI" id="CHEBI:83145"/>
        <dbReference type="EC" id="2.1.3.15"/>
    </reaction>
</comment>
<comment type="pathway">
    <text evidence="1">Lipid metabolism; malonyl-CoA biosynthesis; malonyl-CoA from acetyl-CoA: step 1/1.</text>
</comment>
<comment type="subunit">
    <text evidence="1">Acetyl-CoA carboxylase is a heterohexamer composed of biotin carboxyl carrier protein (AccB), biotin carboxylase (AccC) and two subunits each of ACCase subunit alpha (AccA) and ACCase subunit beta (AccD).</text>
</comment>
<comment type="subcellular location">
    <subcellularLocation>
        <location evidence="1">Cytoplasm</location>
    </subcellularLocation>
</comment>
<comment type="similarity">
    <text evidence="1">Belongs to the AccA family.</text>
</comment>
<dbReference type="EC" id="2.1.3.15" evidence="1"/>
<dbReference type="EMBL" id="CP000671">
    <property type="protein sequence ID" value="ABQ97683.1"/>
    <property type="molecule type" value="Genomic_DNA"/>
</dbReference>
<dbReference type="SMR" id="A5UA82"/>
<dbReference type="KEGG" id="hip:CGSHiEE_00965"/>
<dbReference type="HOGENOM" id="CLU_015486_0_2_6"/>
<dbReference type="UniPathway" id="UPA00655">
    <property type="reaction ID" value="UER00711"/>
</dbReference>
<dbReference type="GO" id="GO:0009317">
    <property type="term" value="C:acetyl-CoA carboxylase complex"/>
    <property type="evidence" value="ECO:0007669"/>
    <property type="project" value="InterPro"/>
</dbReference>
<dbReference type="GO" id="GO:0003989">
    <property type="term" value="F:acetyl-CoA carboxylase activity"/>
    <property type="evidence" value="ECO:0007669"/>
    <property type="project" value="InterPro"/>
</dbReference>
<dbReference type="GO" id="GO:0005524">
    <property type="term" value="F:ATP binding"/>
    <property type="evidence" value="ECO:0007669"/>
    <property type="project" value="UniProtKB-KW"/>
</dbReference>
<dbReference type="GO" id="GO:0016743">
    <property type="term" value="F:carboxyl- or carbamoyltransferase activity"/>
    <property type="evidence" value="ECO:0007669"/>
    <property type="project" value="UniProtKB-UniRule"/>
</dbReference>
<dbReference type="GO" id="GO:0006633">
    <property type="term" value="P:fatty acid biosynthetic process"/>
    <property type="evidence" value="ECO:0007669"/>
    <property type="project" value="UniProtKB-KW"/>
</dbReference>
<dbReference type="GO" id="GO:2001295">
    <property type="term" value="P:malonyl-CoA biosynthetic process"/>
    <property type="evidence" value="ECO:0007669"/>
    <property type="project" value="UniProtKB-UniRule"/>
</dbReference>
<dbReference type="FunFam" id="3.90.226.10:FF:000008">
    <property type="entry name" value="Acetyl-coenzyme A carboxylase carboxyl transferase subunit alpha"/>
    <property type="match status" value="1"/>
</dbReference>
<dbReference type="Gene3D" id="3.90.226.10">
    <property type="entry name" value="2-enoyl-CoA Hydratase, Chain A, domain 1"/>
    <property type="match status" value="1"/>
</dbReference>
<dbReference type="HAMAP" id="MF_00823">
    <property type="entry name" value="AcetylCoA_CT_alpha"/>
    <property type="match status" value="1"/>
</dbReference>
<dbReference type="InterPro" id="IPR001095">
    <property type="entry name" value="Acetyl_CoA_COase_a_su"/>
</dbReference>
<dbReference type="InterPro" id="IPR029045">
    <property type="entry name" value="ClpP/crotonase-like_dom_sf"/>
</dbReference>
<dbReference type="InterPro" id="IPR011763">
    <property type="entry name" value="COA_CT_C"/>
</dbReference>
<dbReference type="NCBIfam" id="TIGR00513">
    <property type="entry name" value="accA"/>
    <property type="match status" value="1"/>
</dbReference>
<dbReference type="NCBIfam" id="NF041504">
    <property type="entry name" value="AccA_sub"/>
    <property type="match status" value="1"/>
</dbReference>
<dbReference type="NCBIfam" id="NF004344">
    <property type="entry name" value="PRK05724.1"/>
    <property type="match status" value="1"/>
</dbReference>
<dbReference type="PANTHER" id="PTHR42853">
    <property type="entry name" value="ACETYL-COENZYME A CARBOXYLASE CARBOXYL TRANSFERASE SUBUNIT ALPHA"/>
    <property type="match status" value="1"/>
</dbReference>
<dbReference type="PANTHER" id="PTHR42853:SF3">
    <property type="entry name" value="ACETYL-COENZYME A CARBOXYLASE CARBOXYL TRANSFERASE SUBUNIT ALPHA, CHLOROPLASTIC"/>
    <property type="match status" value="1"/>
</dbReference>
<dbReference type="Pfam" id="PF03255">
    <property type="entry name" value="ACCA"/>
    <property type="match status" value="1"/>
</dbReference>
<dbReference type="PRINTS" id="PR01069">
    <property type="entry name" value="ACCCTRFRASEA"/>
</dbReference>
<dbReference type="SUPFAM" id="SSF52096">
    <property type="entry name" value="ClpP/crotonase"/>
    <property type="match status" value="1"/>
</dbReference>
<dbReference type="PROSITE" id="PS50989">
    <property type="entry name" value="COA_CT_CTER"/>
    <property type="match status" value="1"/>
</dbReference>
<evidence type="ECO:0000255" key="1">
    <source>
        <dbReference type="HAMAP-Rule" id="MF_00823"/>
    </source>
</evidence>
<evidence type="ECO:0000255" key="2">
    <source>
        <dbReference type="PROSITE-ProRule" id="PRU01137"/>
    </source>
</evidence>
<gene>
    <name evidence="1" type="primary">accA</name>
    <name type="ordered locus">CGSHiEE_00965</name>
</gene>
<reference key="1">
    <citation type="journal article" date="2007" name="Genome Biol.">
        <title>Characterization and modeling of the Haemophilus influenzae core and supragenomes based on the complete genomic sequences of Rd and 12 clinical nontypeable strains.</title>
        <authorList>
            <person name="Hogg J.S."/>
            <person name="Hu F.Z."/>
            <person name="Janto B."/>
            <person name="Boissy R."/>
            <person name="Hayes J."/>
            <person name="Keefe R."/>
            <person name="Post J.C."/>
            <person name="Ehrlich G.D."/>
        </authorList>
    </citation>
    <scope>NUCLEOTIDE SEQUENCE [LARGE SCALE GENOMIC DNA]</scope>
    <source>
        <strain>PittEE</strain>
    </source>
</reference>
<proteinExistence type="inferred from homology"/>
<protein>
    <recommendedName>
        <fullName evidence="1">Acetyl-coenzyme A carboxylase carboxyl transferase subunit alpha</fullName>
        <shortName evidence="1">ACCase subunit alpha</shortName>
        <shortName evidence="1">Acetyl-CoA carboxylase carboxyltransferase subunit alpha</shortName>
        <ecNumber evidence="1">2.1.3.15</ecNumber>
    </recommendedName>
</protein>
<name>ACCA_HAEIE</name>
<sequence length="315" mass="35050">MNQEYLDFELPIAELEAKIEALRAASDDKVDLTDEIKRLQKKSNELTKKTFANLDAWQVSRMARHPNRPYTLDYIEYIFTEFEELAGDRAFADDKAIVGGLARLDGRPVMVIGHQKGRTVKDKVSRNFGMPAPEGYRKALRLMEMAERFKLPIITFIDTPGAYPGIGAEERGQAEAIARNLREMAQLTVPVICTVIGEGGSGGALAIGVGDKVNMLQYSTYSVISPEGCASILWKSAEKASTAAEVMGLTASRLKELNLIDNIVQEPLGGAHRNYAKIAENLKLRLKEDLAELDGLSKEELLNRRYERLMSYGYC</sequence>
<organism>
    <name type="scientific">Haemophilus influenzae (strain PittEE)</name>
    <dbReference type="NCBI Taxonomy" id="374930"/>
    <lineage>
        <taxon>Bacteria</taxon>
        <taxon>Pseudomonadati</taxon>
        <taxon>Pseudomonadota</taxon>
        <taxon>Gammaproteobacteria</taxon>
        <taxon>Pasteurellales</taxon>
        <taxon>Pasteurellaceae</taxon>
        <taxon>Haemophilus</taxon>
    </lineage>
</organism>
<feature type="chain" id="PRO_1000062627" description="Acetyl-coenzyme A carboxylase carboxyl transferase subunit alpha">
    <location>
        <begin position="1"/>
        <end position="315"/>
    </location>
</feature>
<feature type="domain" description="CoA carboxyltransferase C-terminal" evidence="2">
    <location>
        <begin position="38"/>
        <end position="292"/>
    </location>
</feature>
<accession>A5UA82</accession>
<keyword id="KW-0067">ATP-binding</keyword>
<keyword id="KW-0963">Cytoplasm</keyword>
<keyword id="KW-0275">Fatty acid biosynthesis</keyword>
<keyword id="KW-0276">Fatty acid metabolism</keyword>
<keyword id="KW-0444">Lipid biosynthesis</keyword>
<keyword id="KW-0443">Lipid metabolism</keyword>
<keyword id="KW-0547">Nucleotide-binding</keyword>
<keyword id="KW-0808">Transferase</keyword>